<protein>
    <recommendedName>
        <fullName>Tissue factor pathway inhibitor 2</fullName>
        <shortName>TFPI-2</shortName>
    </recommendedName>
</protein>
<proteinExistence type="evidence at transcript level"/>
<dbReference type="EMBL" id="AY234861">
    <property type="protein sequence ID" value="AAO84035.1"/>
    <property type="molecule type" value="mRNA"/>
</dbReference>
<dbReference type="EMBL" id="BC103205">
    <property type="protein sequence ID" value="AAI03206.1"/>
    <property type="molecule type" value="mRNA"/>
</dbReference>
<dbReference type="RefSeq" id="NP_877589.1">
    <property type="nucleotide sequence ID" value="NM_182788.1"/>
</dbReference>
<dbReference type="SMR" id="Q7YRQ8"/>
<dbReference type="FunCoup" id="Q7YRQ8">
    <property type="interactions" value="57"/>
</dbReference>
<dbReference type="STRING" id="9913.ENSBTAP00000021062"/>
<dbReference type="MEROPS" id="I02.013"/>
<dbReference type="MEROPS" id="I02.951"/>
<dbReference type="GlyCosmos" id="Q7YRQ8">
    <property type="glycosylation" value="3 sites, No reported glycans"/>
</dbReference>
<dbReference type="GlyGen" id="Q7YRQ8">
    <property type="glycosylation" value="3 sites"/>
</dbReference>
<dbReference type="PaxDb" id="9913-ENSBTAP00000021062"/>
<dbReference type="GeneID" id="360007"/>
<dbReference type="KEGG" id="bta:360007"/>
<dbReference type="CTD" id="7980"/>
<dbReference type="VEuPathDB" id="HostDB:ENSBTAG00000015844"/>
<dbReference type="eggNOG" id="KOG4295">
    <property type="taxonomic scope" value="Eukaryota"/>
</dbReference>
<dbReference type="HOGENOM" id="CLU_058441_1_0_1"/>
<dbReference type="InParanoid" id="Q7YRQ8"/>
<dbReference type="OMA" id="REEYFFN"/>
<dbReference type="OrthoDB" id="5950222at2759"/>
<dbReference type="TreeFam" id="TF315349"/>
<dbReference type="Proteomes" id="UP000009136">
    <property type="component" value="Chromosome 4"/>
</dbReference>
<dbReference type="Bgee" id="ENSBTAG00000015844">
    <property type="expression patterns" value="Expressed in urethra and 103 other cell types or tissues"/>
</dbReference>
<dbReference type="GO" id="GO:0005615">
    <property type="term" value="C:extracellular space"/>
    <property type="evidence" value="ECO:0000318"/>
    <property type="project" value="GO_Central"/>
</dbReference>
<dbReference type="GO" id="GO:0004867">
    <property type="term" value="F:serine-type endopeptidase inhibitor activity"/>
    <property type="evidence" value="ECO:0000318"/>
    <property type="project" value="GO_Central"/>
</dbReference>
<dbReference type="GO" id="GO:0007596">
    <property type="term" value="P:blood coagulation"/>
    <property type="evidence" value="ECO:0007669"/>
    <property type="project" value="UniProtKB-KW"/>
</dbReference>
<dbReference type="CDD" id="cd22615">
    <property type="entry name" value="Kunitz_TFPI1_TFPI2_3-like"/>
    <property type="match status" value="1"/>
</dbReference>
<dbReference type="CDD" id="cd22616">
    <property type="entry name" value="Kunitz_TFPI2_1-like"/>
    <property type="match status" value="1"/>
</dbReference>
<dbReference type="FunFam" id="4.10.410.10:FF:000004">
    <property type="entry name" value="Tissue factor pathway inhibitor"/>
    <property type="match status" value="1"/>
</dbReference>
<dbReference type="FunFam" id="4.10.410.10:FF:000011">
    <property type="entry name" value="Tissue factor pathway inhibitor"/>
    <property type="match status" value="1"/>
</dbReference>
<dbReference type="FunFam" id="4.10.410.10:FF:000018">
    <property type="entry name" value="Tissue factor pathway inhibitor"/>
    <property type="match status" value="1"/>
</dbReference>
<dbReference type="Gene3D" id="4.10.410.10">
    <property type="entry name" value="Pancreatic trypsin inhibitor Kunitz domain"/>
    <property type="match status" value="3"/>
</dbReference>
<dbReference type="InterPro" id="IPR002223">
    <property type="entry name" value="Kunitz_BPTI"/>
</dbReference>
<dbReference type="InterPro" id="IPR036880">
    <property type="entry name" value="Kunitz_BPTI_sf"/>
</dbReference>
<dbReference type="InterPro" id="IPR020901">
    <property type="entry name" value="Prtase_inh_Kunz-CS"/>
</dbReference>
<dbReference type="InterPro" id="IPR008296">
    <property type="entry name" value="TFPI-like"/>
</dbReference>
<dbReference type="InterPro" id="IPR050098">
    <property type="entry name" value="TFPI/VKTCI-like"/>
</dbReference>
<dbReference type="PANTHER" id="PTHR10083">
    <property type="entry name" value="KUNITZ-TYPE PROTEASE INHIBITOR-RELATED"/>
    <property type="match status" value="1"/>
</dbReference>
<dbReference type="Pfam" id="PF00014">
    <property type="entry name" value="Kunitz_BPTI"/>
    <property type="match status" value="3"/>
</dbReference>
<dbReference type="PIRSF" id="PIRSF001620">
    <property type="entry name" value="TFPI"/>
    <property type="match status" value="1"/>
</dbReference>
<dbReference type="PRINTS" id="PR00759">
    <property type="entry name" value="BASICPTASE"/>
</dbReference>
<dbReference type="SMART" id="SM00131">
    <property type="entry name" value="KU"/>
    <property type="match status" value="3"/>
</dbReference>
<dbReference type="SUPFAM" id="SSF57362">
    <property type="entry name" value="BPTI-like"/>
    <property type="match status" value="3"/>
</dbReference>
<dbReference type="PROSITE" id="PS00280">
    <property type="entry name" value="BPTI_KUNITZ_1"/>
    <property type="match status" value="3"/>
</dbReference>
<dbReference type="PROSITE" id="PS50279">
    <property type="entry name" value="BPTI_KUNITZ_2"/>
    <property type="match status" value="3"/>
</dbReference>
<keyword id="KW-0094">Blood coagulation</keyword>
<keyword id="KW-1015">Disulfide bond</keyword>
<keyword id="KW-0325">Glycoprotein</keyword>
<keyword id="KW-0356">Hemostasis</keyword>
<keyword id="KW-0646">Protease inhibitor</keyword>
<keyword id="KW-1185">Reference proteome</keyword>
<keyword id="KW-0677">Repeat</keyword>
<keyword id="KW-0964">Secreted</keyword>
<keyword id="KW-0722">Serine protease inhibitor</keyword>
<keyword id="KW-0732">Signal</keyword>
<accession>Q7YRQ8</accession>
<reference key="1">
    <citation type="journal article" date="2003" name="Arch. Biochem. Biophys.">
        <title>Molecular cloning, expression, and characterization of bovine tissue factor pathway inhibitor-2.</title>
        <authorList>
            <person name="Du X."/>
            <person name="Deng F.-M."/>
            <person name="Chand H.S."/>
            <person name="Kisiel W."/>
        </authorList>
    </citation>
    <scope>NUCLEOTIDE SEQUENCE [MRNA]</scope>
    <scope>FUNCTION</scope>
    <scope>SUBCELLULAR LOCATION</scope>
</reference>
<reference key="2">
    <citation type="submission" date="2005-08" db="EMBL/GenBank/DDBJ databases">
        <authorList>
            <consortium name="NIH - Mammalian Gene Collection (MGC) project"/>
        </authorList>
    </citation>
    <scope>NUCLEOTIDE SEQUENCE [LARGE SCALE MRNA]</scope>
    <source>
        <strain>Hereford</strain>
        <tissue>Thymus</tissue>
    </source>
</reference>
<comment type="function">
    <text evidence="5">May play a role in the regulation of plasmin-mediated matrix remodeling. Inhibits trypsin, plasmin, factor VIIa/tissue factor and weakly factor Xa. Has no effect on thrombin.</text>
</comment>
<comment type="subunit">
    <text evidence="2">Finds in a complex with ABCB1, TFPI2 and PPP2R3C; leading to the dephosphorylation of ABCB1.</text>
</comment>
<comment type="subcellular location">
    <subcellularLocation>
        <location evidence="5">Secreted</location>
    </subcellularLocation>
</comment>
<comment type="domain">
    <text evidence="1">This inhibitor contains three inhibitory domains.</text>
</comment>
<gene>
    <name type="primary">TFPI2</name>
</gene>
<feature type="signal peptide" evidence="3">
    <location>
        <begin position="1"/>
        <end position="22"/>
    </location>
</feature>
<feature type="chain" id="PRO_0000244394" description="Tissue factor pathway inhibitor 2">
    <location>
        <begin position="23"/>
        <end position="234"/>
    </location>
</feature>
<feature type="domain" description="BPTI/Kunitz inhibitor 1" evidence="4">
    <location>
        <begin position="36"/>
        <end position="86"/>
    </location>
</feature>
<feature type="domain" description="BPTI/Kunitz inhibitor 2" evidence="4">
    <location>
        <begin position="96"/>
        <end position="146"/>
    </location>
</feature>
<feature type="domain" description="BPTI/Kunitz inhibitor 3" evidence="4">
    <location>
        <begin position="155"/>
        <end position="205"/>
    </location>
</feature>
<feature type="site" description="Reactive bond" evidence="1">
    <location>
        <begin position="46"/>
        <end position="47"/>
    </location>
</feature>
<feature type="site" description="Reactive bond" evidence="1">
    <location>
        <begin position="106"/>
        <end position="107"/>
    </location>
</feature>
<feature type="site" description="Reactive bond" evidence="1">
    <location>
        <begin position="165"/>
        <end position="166"/>
    </location>
</feature>
<feature type="glycosylation site" description="N-linked (GlcNAc...) asparagine" evidence="3">
    <location>
        <position position="115"/>
    </location>
</feature>
<feature type="glycosylation site" description="N-linked (GlcNAc...) asparagine" evidence="3">
    <location>
        <position position="167"/>
    </location>
</feature>
<feature type="glycosylation site" description="N-linked (GlcNAc...) asparagine" evidence="3">
    <location>
        <position position="184"/>
    </location>
</feature>
<feature type="disulfide bond" evidence="4">
    <location>
        <begin position="36"/>
        <end position="86"/>
    </location>
</feature>
<feature type="disulfide bond" evidence="4">
    <location>
        <begin position="45"/>
        <end position="69"/>
    </location>
</feature>
<feature type="disulfide bond" evidence="4">
    <location>
        <begin position="61"/>
        <end position="82"/>
    </location>
</feature>
<feature type="disulfide bond" evidence="4">
    <location>
        <begin position="96"/>
        <end position="146"/>
    </location>
</feature>
<feature type="disulfide bond" evidence="4">
    <location>
        <begin position="105"/>
        <end position="129"/>
    </location>
</feature>
<feature type="disulfide bond" evidence="4">
    <location>
        <begin position="121"/>
        <end position="142"/>
    </location>
</feature>
<feature type="disulfide bond" evidence="4">
    <location>
        <begin position="155"/>
        <end position="205"/>
    </location>
</feature>
<feature type="disulfide bond" evidence="4">
    <location>
        <begin position="164"/>
        <end position="188"/>
    </location>
</feature>
<feature type="disulfide bond" evidence="4">
    <location>
        <begin position="180"/>
        <end position="201"/>
    </location>
</feature>
<evidence type="ECO:0000250" key="1"/>
<evidence type="ECO:0000250" key="2">
    <source>
        <dbReference type="UniProtKB" id="P48307"/>
    </source>
</evidence>
<evidence type="ECO:0000255" key="3"/>
<evidence type="ECO:0000255" key="4">
    <source>
        <dbReference type="PROSITE-ProRule" id="PRU00031"/>
    </source>
</evidence>
<evidence type="ECO:0000269" key="5">
    <source>
    </source>
</evidence>
<organism>
    <name type="scientific">Bos taurus</name>
    <name type="common">Bovine</name>
    <dbReference type="NCBI Taxonomy" id="9913"/>
    <lineage>
        <taxon>Eukaryota</taxon>
        <taxon>Metazoa</taxon>
        <taxon>Chordata</taxon>
        <taxon>Craniata</taxon>
        <taxon>Vertebrata</taxon>
        <taxon>Euteleostomi</taxon>
        <taxon>Mammalia</taxon>
        <taxon>Eutheria</taxon>
        <taxon>Laurasiatheria</taxon>
        <taxon>Artiodactyla</taxon>
        <taxon>Ruminantia</taxon>
        <taxon>Pecora</taxon>
        <taxon>Bovidae</taxon>
        <taxon>Bovinae</taxon>
        <taxon>Bos</taxon>
    </lineage>
</organism>
<sequence>MDSVRPLWLMLLSLLLVGTALGDASQAPPGNNAEICLLPPDDGPCRARIPSYYYDRYTQSCREFMYGGCEGNANNFETLEACNEACWKIEKVPKICRLKVNKKQCGELREQYFFNLSSMTCKKFISGGCHSNENRFPDEATCMDFCAPKRAPVFCYSPKDEGLCSANVTRYYFNPRHKACEAFNYTGCGGNDNNFVNLKDCKRTCVKALKKEKNKKMPRLLLANRRLKIKKKQF</sequence>
<name>TFPI2_BOVIN</name>